<protein>
    <recommendedName>
        <fullName>Probable rhamnogalacturonase E</fullName>
        <shortName>RGase E</shortName>
        <shortName>RHG E</shortName>
        <ecNumber>3.2.1.171</ecNumber>
    </recommendedName>
</protein>
<name>RHGE_ASPFN</name>
<organism>
    <name type="scientific">Aspergillus flavus (strain ATCC 200026 / FGSC A1120 / IAM 13836 / NRRL 3357 / JCM 12722 / SRRC 167)</name>
    <dbReference type="NCBI Taxonomy" id="332952"/>
    <lineage>
        <taxon>Eukaryota</taxon>
        <taxon>Fungi</taxon>
        <taxon>Dikarya</taxon>
        <taxon>Ascomycota</taxon>
        <taxon>Pezizomycotina</taxon>
        <taxon>Eurotiomycetes</taxon>
        <taxon>Eurotiomycetidae</taxon>
        <taxon>Eurotiales</taxon>
        <taxon>Aspergillaceae</taxon>
        <taxon>Aspergillus</taxon>
        <taxon>Aspergillus subgen. Circumdati</taxon>
    </lineage>
</organism>
<comment type="function">
    <text evidence="1">Pectinolytic enzymes consist of four classes of enzymes: pectine lyase, polygalacturonase, pectin methylesterase and rhamnogalacturonase. Hydrolyzes alpha-D-galacturonopyranosyl-(1,2)-alpha-L-rhamnopyranosyl linkages in the backbone of the hairy regions of pectins (By similarity).</text>
</comment>
<comment type="catalytic activity">
    <reaction>
        <text>Endohydrolysis of alpha-D-GalA-(1-&gt;2)-alpha-L-Rha glycosidic bond in the rhamnogalacturonan I backbone with initial inversion of anomeric configuration releasing oligosaccharides with beta-D-GalA at the reducing end.</text>
        <dbReference type="EC" id="3.2.1.171"/>
    </reaction>
</comment>
<comment type="subcellular location">
    <subcellularLocation>
        <location evidence="1">Secreted</location>
    </subcellularLocation>
</comment>
<comment type="similarity">
    <text evidence="3">Belongs to the glycosyl hydrolase 28 family.</text>
</comment>
<comment type="sequence caution" evidence="3">
    <conflict type="erroneous initiation">
        <sequence resource="EMBL-CDS" id="EED48913"/>
    </conflict>
    <text>Extended N-terminus.</text>
</comment>
<proteinExistence type="inferred from homology"/>
<dbReference type="EC" id="3.2.1.171"/>
<dbReference type="EMBL" id="EQ963480">
    <property type="protein sequence ID" value="EED48913.1"/>
    <property type="status" value="ALT_INIT"/>
    <property type="molecule type" value="Genomic_DNA"/>
</dbReference>
<dbReference type="RefSeq" id="XP_002380814.1">
    <property type="nucleotide sequence ID" value="XM_002380773.1"/>
</dbReference>
<dbReference type="SMR" id="B8NKB9"/>
<dbReference type="STRING" id="332952.B8NKB9"/>
<dbReference type="GlyCosmos" id="B8NKB9">
    <property type="glycosylation" value="6 sites, No reported glycans"/>
</dbReference>
<dbReference type="EnsemblFungi" id="EED48913">
    <property type="protein sequence ID" value="EED48913"/>
    <property type="gene ID" value="AFLA_089930"/>
</dbReference>
<dbReference type="VEuPathDB" id="FungiDB:AFLA_009206"/>
<dbReference type="eggNOG" id="ENOG502S379">
    <property type="taxonomic scope" value="Eukaryota"/>
</dbReference>
<dbReference type="GO" id="GO:0005576">
    <property type="term" value="C:extracellular region"/>
    <property type="evidence" value="ECO:0007669"/>
    <property type="project" value="UniProtKB-SubCell"/>
</dbReference>
<dbReference type="GO" id="GO:0004650">
    <property type="term" value="F:polygalacturonase activity"/>
    <property type="evidence" value="ECO:0007669"/>
    <property type="project" value="InterPro"/>
</dbReference>
<dbReference type="GO" id="GO:0046576">
    <property type="term" value="F:rhamnogalacturonan alpha-L-rhamnopyranosyl-(1-&gt;4)-alpha-D-galactopyranosyluronide lyase activity"/>
    <property type="evidence" value="ECO:0007669"/>
    <property type="project" value="UniProtKB-ARBA"/>
</dbReference>
<dbReference type="GO" id="GO:0071555">
    <property type="term" value="P:cell wall organization"/>
    <property type="evidence" value="ECO:0007669"/>
    <property type="project" value="UniProtKB-KW"/>
</dbReference>
<dbReference type="GO" id="GO:0000272">
    <property type="term" value="P:polysaccharide catabolic process"/>
    <property type="evidence" value="ECO:0007669"/>
    <property type="project" value="UniProtKB-KW"/>
</dbReference>
<dbReference type="Gene3D" id="2.160.20.10">
    <property type="entry name" value="Single-stranded right-handed beta-helix, Pectin lyase-like"/>
    <property type="match status" value="1"/>
</dbReference>
<dbReference type="InterPro" id="IPR000743">
    <property type="entry name" value="Glyco_hydro_28"/>
</dbReference>
<dbReference type="InterPro" id="IPR012334">
    <property type="entry name" value="Pectin_lyas_fold"/>
</dbReference>
<dbReference type="InterPro" id="IPR011050">
    <property type="entry name" value="Pectin_lyase_fold/virulence"/>
</dbReference>
<dbReference type="PANTHER" id="PTHR31736">
    <property type="match status" value="1"/>
</dbReference>
<dbReference type="PANTHER" id="PTHR31736:SF19">
    <property type="entry name" value="PECTIN LYASE SUPERFAMILY PROTEIN-RELATED"/>
    <property type="match status" value="1"/>
</dbReference>
<dbReference type="Pfam" id="PF00295">
    <property type="entry name" value="Glyco_hydro_28"/>
    <property type="match status" value="1"/>
</dbReference>
<dbReference type="SUPFAM" id="SSF51126">
    <property type="entry name" value="Pectin lyase-like"/>
    <property type="match status" value="1"/>
</dbReference>
<accession>B8NKB9</accession>
<evidence type="ECO:0000250" key="1"/>
<evidence type="ECO:0000255" key="2"/>
<evidence type="ECO:0000305" key="3"/>
<reference key="1">
    <citation type="journal article" date="2015" name="Genome Announc.">
        <title>Genome sequence of Aspergillus flavus NRRL 3357, a strain that causes aflatoxin contamination of food and feed.</title>
        <authorList>
            <person name="Nierman W.C."/>
            <person name="Yu J."/>
            <person name="Fedorova-Abrams N.D."/>
            <person name="Losada L."/>
            <person name="Cleveland T.E."/>
            <person name="Bhatnagar D."/>
            <person name="Bennett J.W."/>
            <person name="Dean R."/>
            <person name="Payne G.A."/>
        </authorList>
    </citation>
    <scope>NUCLEOTIDE SEQUENCE [LARGE SCALE GENOMIC DNA]</scope>
    <source>
        <strain>ATCC 200026 / FGSC A1120 / IAM 13836 / NRRL 3357 / JCM 12722 / SRRC 167</strain>
    </source>
</reference>
<feature type="signal peptide" evidence="2">
    <location>
        <begin position="1"/>
        <end position="21"/>
    </location>
</feature>
<feature type="chain" id="PRO_0000394957" description="Probable rhamnogalacturonase E">
    <location>
        <begin position="22"/>
        <end position="449"/>
    </location>
</feature>
<feature type="active site" description="Proton donor" evidence="1">
    <location>
        <position position="221"/>
    </location>
</feature>
<feature type="active site" evidence="1">
    <location>
        <position position="296"/>
    </location>
</feature>
<feature type="glycosylation site" description="N-linked (GlcNAc...) asparagine" evidence="2">
    <location>
        <position position="53"/>
    </location>
</feature>
<feature type="glycosylation site" description="N-linked (GlcNAc...) asparagine" evidence="2">
    <location>
        <position position="91"/>
    </location>
</feature>
<feature type="glycosylation site" description="N-linked (GlcNAc...) asparagine" evidence="2">
    <location>
        <position position="106"/>
    </location>
</feature>
<feature type="glycosylation site" description="N-linked (GlcNAc...) asparagine" evidence="2">
    <location>
        <position position="241"/>
    </location>
</feature>
<feature type="glycosylation site" description="N-linked (GlcNAc...) asparagine" evidence="2">
    <location>
        <position position="256"/>
    </location>
</feature>
<feature type="glycosylation site" description="N-linked (GlcNAc...) asparagine" evidence="2">
    <location>
        <position position="323"/>
    </location>
</feature>
<feature type="disulfide bond" evidence="1">
    <location>
        <begin position="42"/>
        <end position="68"/>
    </location>
</feature>
<feature type="disulfide bond" evidence="1">
    <location>
        <begin position="223"/>
        <end position="240"/>
    </location>
</feature>
<feature type="disulfide bond" evidence="1">
    <location>
        <begin position="346"/>
        <end position="352"/>
    </location>
</feature>
<feature type="disulfide bond" evidence="1">
    <location>
        <begin position="374"/>
        <end position="383"/>
    </location>
</feature>
<sequence>MRSKTFSVLSSCLLLIATVQGQLSGSVGPSTSISDKKAVKTCNVLDYGATNDNKTDVGQPIMDAFEDCGSGGVIYIPDGDYLIQEWVSLENGTAFAIQLDGVIYRNGTTTSQGYMFGISGGSDFELYSSTSKGAIQGSGYLYHMNGEFTAPRLLHISDVSHWSVHDIALVDAPMFHFVIDDASNGEVYNMAIRGGNSGGLDGIDVSGDNIWIHDVMVTNKDECVTVKTGSHNFQIENIYCNWSGGCAMGSLGSGTNVSNIVYRNIYTWNSNQMYMIKSNGGDGEVSNLLFENFIGHGNAYSLDLDSEWSSMDTVDGDGIFYRNITFKNWKGTETDGESRPSIRVICPEATPCTDITIEDVDLWTEEGDSETYVCKNAFGSGACLKSDSSSTATYATTTTVTSAPSGYSATTMAADLTSAFGTDASIPIPTIPTSFYPGATPYSALAGSS</sequence>
<gene>
    <name type="primary">rhgE</name>
    <name type="ORF">AFLA_089930</name>
</gene>
<keyword id="KW-0119">Carbohydrate metabolism</keyword>
<keyword id="KW-0961">Cell wall biogenesis/degradation</keyword>
<keyword id="KW-1015">Disulfide bond</keyword>
<keyword id="KW-0325">Glycoprotein</keyword>
<keyword id="KW-0326">Glycosidase</keyword>
<keyword id="KW-0378">Hydrolase</keyword>
<keyword id="KW-0624">Polysaccharide degradation</keyword>
<keyword id="KW-0964">Secreted</keyword>
<keyword id="KW-0732">Signal</keyword>